<organism>
    <name type="scientific">Acetobacter aceti</name>
    <dbReference type="NCBI Taxonomy" id="435"/>
    <lineage>
        <taxon>Bacteria</taxon>
        <taxon>Pseudomonadati</taxon>
        <taxon>Pseudomonadota</taxon>
        <taxon>Alphaproteobacteria</taxon>
        <taxon>Acetobacterales</taxon>
        <taxon>Acetobacteraceae</taxon>
        <taxon>Acetobacter</taxon>
        <taxon>Acetobacter subgen. Acetobacter</taxon>
    </lineage>
</organism>
<name>ADHA_ACEAC</name>
<reference key="1">
    <citation type="journal article" date="1989" name="J. Bacteriol.">
        <title>Cloning and sequencing of the gene encoding the 72-kilodalton dehydrogenase subunit of alcohol dehydrogenase from Acetobacter aceti.</title>
        <authorList>
            <person name="Inoue T."/>
            <person name="Sunagawa M."/>
            <person name="Mori A."/>
            <person name="Imai C."/>
            <person name="Fukuda M."/>
            <person name="Takagi M."/>
            <person name="Yano K."/>
        </authorList>
    </citation>
    <scope>NUCLEOTIDE SEQUENCE [GENOMIC DNA]</scope>
    <scope>PROTEIN SEQUENCE OF 36-50</scope>
    <source>
        <strain>K6033</strain>
    </source>
</reference>
<reference key="2">
    <citation type="journal article" date="1995" name="Biochem. J.">
        <title>The structure of the quinoprotein alcohol dehydrogenase of Acetobacter aceti modelled on that of methanol dehydrogenase from Methylobacterium extorquens.</title>
        <authorList>
            <person name="Cozier G.E."/>
            <person name="Giles I.G."/>
            <person name="Anthony C."/>
        </authorList>
    </citation>
    <scope>3D-STRUCTURE MODELING</scope>
</reference>
<keyword id="KW-0106">Calcium</keyword>
<keyword id="KW-1003">Cell membrane</keyword>
<keyword id="KW-0903">Direct protein sequencing</keyword>
<keyword id="KW-1015">Disulfide bond</keyword>
<keyword id="KW-0249">Electron transport</keyword>
<keyword id="KW-0349">Heme</keyword>
<keyword id="KW-0408">Iron</keyword>
<keyword id="KW-0472">Membrane</keyword>
<keyword id="KW-0479">Metal-binding</keyword>
<keyword id="KW-0560">Oxidoreductase</keyword>
<keyword id="KW-0634">PQQ</keyword>
<keyword id="KW-0679">Respiratory chain</keyword>
<keyword id="KW-0732">Signal</keyword>
<keyword id="KW-0813">Transport</keyword>
<comment type="function">
    <text evidence="1">Dehydrogenase component of the alcohol dehydrogenase multicomponent enzyme system which is involved in the production of acetic acid and in the ethanol oxidase respiratory chain. Quinohemoprotein alcohol dehydrogenase (ADH) catalyzes the oxidation of ethanol to acetaldehyde by transferring electrons to the ubiquinone embedded in the membrane phospholipids. The electrons transfer from ethanol to membranous ubiquinone occurs from pyrroloquinoline quinone (PQQ) to one heme c in subunit I (AdhA), and finally to two heme c in subunit II (AdhB). Besides ubiquinone reduction, ADH also has a ubiquinol (QH2) oxidation reaction which mediates electron transfer from ubiquinol to the non-energy generating bypass oxidase system. The electrons transfer occurs from ubiquinol (QH2) to the additional heme c within subunit II (AdhB).</text>
</comment>
<comment type="catalytic activity">
    <reaction evidence="1">
        <text>ethanol + a ubiquinone = a ubiquinol + acetaldehyde</text>
        <dbReference type="Rhea" id="RHEA:26442"/>
        <dbReference type="Rhea" id="RHEA-COMP:9565"/>
        <dbReference type="Rhea" id="RHEA-COMP:9566"/>
        <dbReference type="ChEBI" id="CHEBI:15343"/>
        <dbReference type="ChEBI" id="CHEBI:16236"/>
        <dbReference type="ChEBI" id="CHEBI:16389"/>
        <dbReference type="ChEBI" id="CHEBI:17976"/>
        <dbReference type="EC" id="1.1.5.5"/>
    </reaction>
</comment>
<comment type="cofactor">
    <cofactor evidence="1">
        <name>pyrroloquinoline quinone</name>
        <dbReference type="ChEBI" id="CHEBI:58442"/>
    </cofactor>
    <text evidence="1">Binds 1 PQQ group per subunit.</text>
</comment>
<comment type="cofactor">
    <cofactor evidence="1">
        <name>Ca(2+)</name>
        <dbReference type="ChEBI" id="CHEBI:29108"/>
    </cofactor>
    <text evidence="3">Binds 1 Ca(2+) ion per subunit.</text>
</comment>
<comment type="cofactor">
    <cofactor evidence="1">
        <name>heme c</name>
        <dbReference type="ChEBI" id="CHEBI:61717"/>
    </cofactor>
    <text evidence="1">Binds 1 heme c group covalently per subunit.</text>
</comment>
<comment type="subunit">
    <text evidence="2">The alcohol dehydrogenase multicomponent enzyme system is composed of a dehydrogenase subunit I (AdhA) and a cytochrome c subunit II (AdhB).</text>
</comment>
<comment type="subcellular location">
    <subcellularLocation>
        <location evidence="8">Cell membrane</location>
        <topology evidence="8">Peripheral membrane protein</topology>
        <orientation evidence="8">Periplasmic side</orientation>
    </subcellularLocation>
</comment>
<comment type="similarity">
    <text evidence="8">Belongs to the bacterial PQQ dehydrogenase family.</text>
</comment>
<feature type="signal peptide" evidence="6">
    <location>
        <begin position="1"/>
        <end position="35"/>
    </location>
</feature>
<feature type="chain" id="PRO_0000025559" description="Alcohol dehydrogenase (quinone), dehydrogenase subunit">
    <location>
        <begin position="36"/>
        <end position="742"/>
    </location>
</feature>
<feature type="domain" description="Cytochrome c" evidence="4">
    <location>
        <begin position="636"/>
        <end position="715"/>
    </location>
</feature>
<feature type="region of interest" description="Disordered" evidence="5">
    <location>
        <begin position="722"/>
        <end position="742"/>
    </location>
</feature>
<feature type="compositionally biased region" description="Basic and acidic residues" evidence="5">
    <location>
        <begin position="722"/>
        <end position="732"/>
    </location>
</feature>
<feature type="active site" description="Proton acceptor" evidence="3">
    <location>
        <position position="343"/>
    </location>
</feature>
<feature type="binding site" evidence="3">
    <location>
        <position position="96"/>
    </location>
    <ligand>
        <name>pyrroloquinoline quinone</name>
        <dbReference type="ChEBI" id="CHEBI:58442"/>
    </ligand>
</feature>
<feature type="binding site" evidence="3">
    <location>
        <position position="148"/>
    </location>
    <ligand>
        <name>pyrroloquinoline quinone</name>
        <dbReference type="ChEBI" id="CHEBI:58442"/>
    </ligand>
</feature>
<feature type="binding site" evidence="3">
    <location>
        <position position="216"/>
    </location>
    <ligand>
        <name>Ca(2+)</name>
        <dbReference type="ChEBI" id="CHEBI:29108"/>
    </ligand>
</feature>
<feature type="binding site" evidence="3">
    <location>
        <position position="278"/>
    </location>
    <ligand>
        <name>pyrroloquinoline quinone</name>
        <dbReference type="ChEBI" id="CHEBI:58442"/>
    </ligand>
</feature>
<feature type="binding site" evidence="3">
    <location>
        <position position="298"/>
    </location>
    <ligand>
        <name>Ca(2+)</name>
        <dbReference type="ChEBI" id="CHEBI:29108"/>
    </ligand>
</feature>
<feature type="binding site" evidence="3">
    <location>
        <position position="343"/>
    </location>
    <ligand>
        <name>Ca(2+)</name>
        <dbReference type="ChEBI" id="CHEBI:29108"/>
    </ligand>
</feature>
<feature type="binding site" evidence="3">
    <location>
        <position position="370"/>
    </location>
    <ligand>
        <name>pyrroloquinoline quinone</name>
        <dbReference type="ChEBI" id="CHEBI:58442"/>
    </ligand>
</feature>
<feature type="binding site" evidence="3">
    <location>
        <position position="584"/>
    </location>
    <ligand>
        <name>pyrroloquinoline quinone</name>
        <dbReference type="ChEBI" id="CHEBI:58442"/>
    </ligand>
</feature>
<feature type="binding site" description="covalent" evidence="3">
    <location>
        <position position="649"/>
    </location>
    <ligand>
        <name>heme c</name>
        <dbReference type="ChEBI" id="CHEBI:61717"/>
    </ligand>
</feature>
<feature type="binding site" description="covalent" evidence="3">
    <location>
        <position position="652"/>
    </location>
    <ligand>
        <name>heme c</name>
        <dbReference type="ChEBI" id="CHEBI:61717"/>
    </ligand>
</feature>
<feature type="binding site" description="axial binding residue" evidence="3">
    <location>
        <position position="653"/>
    </location>
    <ligand>
        <name>heme c</name>
        <dbReference type="ChEBI" id="CHEBI:61717"/>
    </ligand>
    <ligandPart>
        <name>Fe</name>
        <dbReference type="ChEBI" id="CHEBI:18248"/>
    </ligandPart>
</feature>
<feature type="binding site" description="axial binding residue" evidence="3">
    <location>
        <position position="692"/>
    </location>
    <ligand>
        <name>heme c</name>
        <dbReference type="ChEBI" id="CHEBI:61717"/>
    </ligand>
    <ligandPart>
        <name>Fe</name>
        <dbReference type="ChEBI" id="CHEBI:18248"/>
    </ligandPart>
</feature>
<feature type="disulfide bond" evidence="3">
    <location>
        <begin position="142"/>
        <end position="143"/>
    </location>
</feature>
<sequence length="742" mass="81521">MTRPASAKRRSLLGILAAGTICAAALPYAAVPARADGQGNTGEAIIHADDHPENWLSYGRTYSEQRYSPLDQINRSNVGDLKLLGYYTLDTNRGQEATPLVVDGIMYATTNWSKMEALDAATGKLLWQYDPKVPGNIADKGCCDTVNRGAGYWNGKVFWGTFDGRLVAADAKTGKKVWAVNTIPADASLGKQRSYTVDGAVRVAKGLVLIGNGGAEFGARGFVSAFDAETGKLKWRFYTVPNNKNEPDHAASDNILMNKAYKTWGPKGAWVRQGGGGTVWDSLVYDPVSDLIYLAVGNGSPWNYKYRSEGIGSNLFLGSIVALKPETGEYVWHFQATPMDQWDYTSVQQIMTLDMPVKGEMRHVIVHAPKNGFFYVLDAKTGEFLSGKNYVYQNWANGLDPLTGRPMYNPDGLYTLNGKFWYGIPGPLGAHNFMAMAYSPKTHLVYIPAHQIPFGYKNQVGGFKPHADSWNVGLDMTKNGLPDTPEARTAYIKDLHGWLLAWDPVKMETVWKIDHKGPWNGGILATGGDLLFQGLANGEFHAYDATNGSDLYKFDAQSGIIAPPMTYSVNGKQYVAVEVGWGGIYPISMGGVGRTSGWTVNHSYIAAFSLDGKAKLPALNNRGFLPVKPPAQYDQKVVDNGYFQYQTYCQTCHGDNGEGAGMLPDLRWAGAIRHQDAFYNVVGRGALTAYGMDRFDTSMTPDEIEAIRQYLIKRANDTYQREVDARKNDKNIPENPTLGINP</sequence>
<accession>P18278</accession>
<protein>
    <recommendedName>
        <fullName evidence="7">Alcohol dehydrogenase (quinone), dehydrogenase subunit</fullName>
        <shortName evidence="1">ADH</shortName>
        <ecNumber evidence="1">1.1.5.5</ecNumber>
    </recommendedName>
    <alternativeName>
        <fullName evidence="1">Alcohol dehydrogenase (quinone), acceptor subunit</fullName>
    </alternativeName>
    <alternativeName>
        <fullName evidence="1">Alcohol dehydrogenase (quinone), subunit I</fullName>
    </alternativeName>
    <alternativeName>
        <fullName evidence="1">Ethanol:Q2 reductase</fullName>
    </alternativeName>
    <alternativeName>
        <fullName evidence="1">G3-ADH subunit I</fullName>
    </alternativeName>
    <alternativeName>
        <fullName evidence="1">Quinohemoprotein alcohol dehydrogenase</fullName>
    </alternativeName>
    <alternativeName>
        <fullName evidence="1">Quinohemoprotein-cytochrome c complex</fullName>
    </alternativeName>
    <alternativeName>
        <fullName evidence="1">Ubiquinol oxidase</fullName>
    </alternativeName>
</protein>
<evidence type="ECO:0000250" key="1">
    <source>
        <dbReference type="UniProtKB" id="O05542"/>
    </source>
</evidence>
<evidence type="ECO:0000250" key="2">
    <source>
        <dbReference type="UniProtKB" id="P28036"/>
    </source>
</evidence>
<evidence type="ECO:0000250" key="3">
    <source>
        <dbReference type="UniProtKB" id="Q8GR64"/>
    </source>
</evidence>
<evidence type="ECO:0000255" key="4">
    <source>
        <dbReference type="PROSITE-ProRule" id="PRU00433"/>
    </source>
</evidence>
<evidence type="ECO:0000256" key="5">
    <source>
        <dbReference type="SAM" id="MobiDB-lite"/>
    </source>
</evidence>
<evidence type="ECO:0000269" key="6">
    <source>
    </source>
</evidence>
<evidence type="ECO:0000303" key="7">
    <source>
    </source>
</evidence>
<evidence type="ECO:0000305" key="8"/>
<dbReference type="EC" id="1.1.5.5" evidence="1"/>
<dbReference type="EMBL" id="D90004">
    <property type="protein sequence ID" value="BAA14058.1"/>
    <property type="molecule type" value="Genomic_DNA"/>
</dbReference>
<dbReference type="PIR" id="JS0326">
    <property type="entry name" value="JS0326"/>
</dbReference>
<dbReference type="SMR" id="P18278"/>
<dbReference type="STRING" id="435.A0U92_12090"/>
<dbReference type="BRENDA" id="1.1.5.5">
    <property type="organism ID" value="33"/>
</dbReference>
<dbReference type="GO" id="GO:0030288">
    <property type="term" value="C:outer membrane-bounded periplasmic space"/>
    <property type="evidence" value="ECO:0007669"/>
    <property type="project" value="InterPro"/>
</dbReference>
<dbReference type="GO" id="GO:0005886">
    <property type="term" value="C:plasma membrane"/>
    <property type="evidence" value="ECO:0007669"/>
    <property type="project" value="UniProtKB-SubCell"/>
</dbReference>
<dbReference type="GO" id="GO:0005509">
    <property type="term" value="F:calcium ion binding"/>
    <property type="evidence" value="ECO:0007669"/>
    <property type="project" value="InterPro"/>
</dbReference>
<dbReference type="GO" id="GO:0009055">
    <property type="term" value="F:electron transfer activity"/>
    <property type="evidence" value="ECO:0007669"/>
    <property type="project" value="InterPro"/>
</dbReference>
<dbReference type="GO" id="GO:0020037">
    <property type="term" value="F:heme binding"/>
    <property type="evidence" value="ECO:0007669"/>
    <property type="project" value="InterPro"/>
</dbReference>
<dbReference type="GO" id="GO:0016614">
    <property type="term" value="F:oxidoreductase activity, acting on CH-OH group of donors"/>
    <property type="evidence" value="ECO:0007669"/>
    <property type="project" value="InterPro"/>
</dbReference>
<dbReference type="CDD" id="cd10279">
    <property type="entry name" value="PQQ_ADH_II"/>
    <property type="match status" value="1"/>
</dbReference>
<dbReference type="Gene3D" id="1.10.760.10">
    <property type="entry name" value="Cytochrome c-like domain"/>
    <property type="match status" value="1"/>
</dbReference>
<dbReference type="Gene3D" id="2.140.10.10">
    <property type="entry name" value="Quinoprotein alcohol dehydrogenase-like superfamily"/>
    <property type="match status" value="1"/>
</dbReference>
<dbReference type="InterPro" id="IPR009056">
    <property type="entry name" value="Cyt_c-like_dom"/>
</dbReference>
<dbReference type="InterPro" id="IPR036909">
    <property type="entry name" value="Cyt_c-like_dom_sf"/>
</dbReference>
<dbReference type="InterPro" id="IPR018391">
    <property type="entry name" value="PQQ_b-propeller_rpt"/>
</dbReference>
<dbReference type="InterPro" id="IPR017512">
    <property type="entry name" value="PQQ_MeOH/EtOH_DH"/>
</dbReference>
<dbReference type="InterPro" id="IPR002372">
    <property type="entry name" value="PQQ_rpt_dom"/>
</dbReference>
<dbReference type="InterPro" id="IPR011047">
    <property type="entry name" value="Quinoprotein_ADH-like_sf"/>
</dbReference>
<dbReference type="InterPro" id="IPR001479">
    <property type="entry name" value="Quinoprotein_DH_CS"/>
</dbReference>
<dbReference type="InterPro" id="IPR006311">
    <property type="entry name" value="TAT_signal"/>
</dbReference>
<dbReference type="NCBIfam" id="TIGR03075">
    <property type="entry name" value="PQQ_enz_alc_DH"/>
    <property type="match status" value="1"/>
</dbReference>
<dbReference type="PANTHER" id="PTHR32303">
    <property type="entry name" value="QUINOPROTEIN ALCOHOL DEHYDROGENASE (CYTOCHROME C)"/>
    <property type="match status" value="1"/>
</dbReference>
<dbReference type="Pfam" id="PF13442">
    <property type="entry name" value="Cytochrome_CBB3"/>
    <property type="match status" value="1"/>
</dbReference>
<dbReference type="Pfam" id="PF01011">
    <property type="entry name" value="PQQ"/>
    <property type="match status" value="2"/>
</dbReference>
<dbReference type="SMART" id="SM00564">
    <property type="entry name" value="PQQ"/>
    <property type="match status" value="5"/>
</dbReference>
<dbReference type="SUPFAM" id="SSF46626">
    <property type="entry name" value="Cytochrome c"/>
    <property type="match status" value="1"/>
</dbReference>
<dbReference type="SUPFAM" id="SSF50998">
    <property type="entry name" value="Quinoprotein alcohol dehydrogenase-like"/>
    <property type="match status" value="1"/>
</dbReference>
<dbReference type="PROSITE" id="PS00363">
    <property type="entry name" value="BACTERIAL_PQQ_1"/>
    <property type="match status" value="1"/>
</dbReference>
<dbReference type="PROSITE" id="PS00364">
    <property type="entry name" value="BACTERIAL_PQQ_2"/>
    <property type="match status" value="1"/>
</dbReference>
<dbReference type="PROSITE" id="PS51007">
    <property type="entry name" value="CYTC"/>
    <property type="match status" value="1"/>
</dbReference>
<gene>
    <name evidence="1" type="primary">adhA</name>
    <name type="synonym">adh1</name>
</gene>
<proteinExistence type="evidence at protein level"/>